<feature type="chain" id="PRO_0000225072" description="UDP-N-acetylglucosamine--N-acetylmuramyl-(pentapeptide) pyrophosphoryl-undecaprenol N-acetylglucosamine transferase">
    <location>
        <begin position="1"/>
        <end position="378"/>
    </location>
</feature>
<feature type="binding site" evidence="1">
    <location>
        <begin position="24"/>
        <end position="26"/>
    </location>
    <ligand>
        <name>UDP-N-acetyl-alpha-D-glucosamine</name>
        <dbReference type="ChEBI" id="CHEBI:57705"/>
    </ligand>
</feature>
<feature type="binding site" evidence="1">
    <location>
        <position position="144"/>
    </location>
    <ligand>
        <name>UDP-N-acetyl-alpha-D-glucosamine</name>
        <dbReference type="ChEBI" id="CHEBI:57705"/>
    </ligand>
</feature>
<feature type="binding site" evidence="1">
    <location>
        <position position="181"/>
    </location>
    <ligand>
        <name>UDP-N-acetyl-alpha-D-glucosamine</name>
        <dbReference type="ChEBI" id="CHEBI:57705"/>
    </ligand>
</feature>
<feature type="binding site" evidence="1">
    <location>
        <position position="215"/>
    </location>
    <ligand>
        <name>UDP-N-acetyl-alpha-D-glucosamine</name>
        <dbReference type="ChEBI" id="CHEBI:57705"/>
    </ligand>
</feature>
<feature type="binding site" evidence="1">
    <location>
        <position position="310"/>
    </location>
    <ligand>
        <name>UDP-N-acetyl-alpha-D-glucosamine</name>
        <dbReference type="ChEBI" id="CHEBI:57705"/>
    </ligand>
</feature>
<dbReference type="EC" id="2.4.1.227" evidence="1"/>
<dbReference type="EMBL" id="AP006618">
    <property type="protein sequence ID" value="BAD56612.1"/>
    <property type="molecule type" value="Genomic_DNA"/>
</dbReference>
<dbReference type="RefSeq" id="WP_011208297.1">
    <property type="nucleotide sequence ID" value="NC_006361.1"/>
</dbReference>
<dbReference type="SMR" id="Q5YYX9"/>
<dbReference type="STRING" id="247156.NFA_17660"/>
<dbReference type="CAZy" id="GT28">
    <property type="family name" value="Glycosyltransferase Family 28"/>
</dbReference>
<dbReference type="GeneID" id="61132547"/>
<dbReference type="KEGG" id="nfa:NFA_17660"/>
<dbReference type="eggNOG" id="COG0707">
    <property type="taxonomic scope" value="Bacteria"/>
</dbReference>
<dbReference type="HOGENOM" id="CLU_037404_1_0_11"/>
<dbReference type="UniPathway" id="UPA00219"/>
<dbReference type="Proteomes" id="UP000006820">
    <property type="component" value="Chromosome"/>
</dbReference>
<dbReference type="GO" id="GO:0005886">
    <property type="term" value="C:plasma membrane"/>
    <property type="evidence" value="ECO:0007669"/>
    <property type="project" value="UniProtKB-SubCell"/>
</dbReference>
<dbReference type="GO" id="GO:0051991">
    <property type="term" value="F:UDP-N-acetyl-D-glucosamine:N-acetylmuramoyl-L-alanyl-D-glutamyl-meso-2,6-diaminopimelyl-D-alanyl-D-alanine-diphosphoundecaprenol 4-beta-N-acetylglucosaminlytransferase activity"/>
    <property type="evidence" value="ECO:0007669"/>
    <property type="project" value="RHEA"/>
</dbReference>
<dbReference type="GO" id="GO:0050511">
    <property type="term" value="F:undecaprenyldiphospho-muramoylpentapeptide beta-N-acetylglucosaminyltransferase activity"/>
    <property type="evidence" value="ECO:0007669"/>
    <property type="project" value="UniProtKB-UniRule"/>
</dbReference>
<dbReference type="GO" id="GO:0005975">
    <property type="term" value="P:carbohydrate metabolic process"/>
    <property type="evidence" value="ECO:0007669"/>
    <property type="project" value="InterPro"/>
</dbReference>
<dbReference type="GO" id="GO:0051301">
    <property type="term" value="P:cell division"/>
    <property type="evidence" value="ECO:0007669"/>
    <property type="project" value="UniProtKB-KW"/>
</dbReference>
<dbReference type="GO" id="GO:0071555">
    <property type="term" value="P:cell wall organization"/>
    <property type="evidence" value="ECO:0007669"/>
    <property type="project" value="UniProtKB-KW"/>
</dbReference>
<dbReference type="GO" id="GO:0030259">
    <property type="term" value="P:lipid glycosylation"/>
    <property type="evidence" value="ECO:0007669"/>
    <property type="project" value="UniProtKB-UniRule"/>
</dbReference>
<dbReference type="GO" id="GO:0009252">
    <property type="term" value="P:peptidoglycan biosynthetic process"/>
    <property type="evidence" value="ECO:0007669"/>
    <property type="project" value="UniProtKB-UniRule"/>
</dbReference>
<dbReference type="GO" id="GO:0008360">
    <property type="term" value="P:regulation of cell shape"/>
    <property type="evidence" value="ECO:0007669"/>
    <property type="project" value="UniProtKB-KW"/>
</dbReference>
<dbReference type="CDD" id="cd03785">
    <property type="entry name" value="GT28_MurG"/>
    <property type="match status" value="1"/>
</dbReference>
<dbReference type="Gene3D" id="3.40.50.2000">
    <property type="entry name" value="Glycogen Phosphorylase B"/>
    <property type="match status" value="2"/>
</dbReference>
<dbReference type="HAMAP" id="MF_00033">
    <property type="entry name" value="MurG"/>
    <property type="match status" value="1"/>
</dbReference>
<dbReference type="InterPro" id="IPR006009">
    <property type="entry name" value="GlcNAc_MurG"/>
</dbReference>
<dbReference type="InterPro" id="IPR007235">
    <property type="entry name" value="Glyco_trans_28_C"/>
</dbReference>
<dbReference type="InterPro" id="IPR004276">
    <property type="entry name" value="GlycoTrans_28_N"/>
</dbReference>
<dbReference type="NCBIfam" id="TIGR01133">
    <property type="entry name" value="murG"/>
    <property type="match status" value="1"/>
</dbReference>
<dbReference type="PANTHER" id="PTHR21015:SF22">
    <property type="entry name" value="GLYCOSYLTRANSFERASE"/>
    <property type="match status" value="1"/>
</dbReference>
<dbReference type="PANTHER" id="PTHR21015">
    <property type="entry name" value="UDP-N-ACETYLGLUCOSAMINE--N-ACETYLMURAMYL-(PENTAPEPTIDE) PYROPHOSPHORYL-UNDECAPRENOL N-ACETYLGLUCOSAMINE TRANSFERASE 1"/>
    <property type="match status" value="1"/>
</dbReference>
<dbReference type="Pfam" id="PF04101">
    <property type="entry name" value="Glyco_tran_28_C"/>
    <property type="match status" value="1"/>
</dbReference>
<dbReference type="Pfam" id="PF03033">
    <property type="entry name" value="Glyco_transf_28"/>
    <property type="match status" value="1"/>
</dbReference>
<dbReference type="SUPFAM" id="SSF53756">
    <property type="entry name" value="UDP-Glycosyltransferase/glycogen phosphorylase"/>
    <property type="match status" value="1"/>
</dbReference>
<gene>
    <name evidence="1" type="primary">murG</name>
    <name type="ordered locus">NFA_17660</name>
</gene>
<protein>
    <recommendedName>
        <fullName evidence="1">UDP-N-acetylglucosamine--N-acetylmuramyl-(pentapeptide) pyrophosphoryl-undecaprenol N-acetylglucosamine transferase</fullName>
        <ecNumber evidence="1">2.4.1.227</ecNumber>
    </recommendedName>
    <alternativeName>
        <fullName evidence="1">Undecaprenyl-PP-MurNAc-pentapeptide-UDPGlcNAc GlcNAc transferase</fullName>
    </alternativeName>
</protein>
<sequence length="378" mass="39253">MEEYEVTTKDSGSGLSVIVAGGGTAGHIEPALAVADALRRLDPAIRVTALGTERGLETRLVPERGYPLELIPPVPLPRKPTVDLLRLPARVRASVRRTRAVIDAVQADVIIGFGGYVALPAYLAAGRGVLRRRRAVPVIVHEANAKAGIANKIGARVARAVLAAVPDSGLPGAEVVGIPVRESITALDRTALRAEARAHFGLPDAGPVLLVFGGSQGARSLNEAIAGAAPQLAAAGISVLHAHGPKNTLDVPETGGTARYVAVPYLSRMDLAYAAADAVVCRSGAMTVAEVSAVGLPAFYVPLPHGNGEQEFNARPIVAQGGGRIVPDSELTPKYVIDEVIPLLLDRTRLTEMGRAAAGAGHRDAADEVARIAVRVAR</sequence>
<reference key="1">
    <citation type="journal article" date="2004" name="Proc. Natl. Acad. Sci. U.S.A.">
        <title>The complete genomic sequence of Nocardia farcinica IFM 10152.</title>
        <authorList>
            <person name="Ishikawa J."/>
            <person name="Yamashita A."/>
            <person name="Mikami Y."/>
            <person name="Hoshino Y."/>
            <person name="Kurita H."/>
            <person name="Hotta K."/>
            <person name="Shiba T."/>
            <person name="Hattori M."/>
        </authorList>
    </citation>
    <scope>NUCLEOTIDE SEQUENCE [LARGE SCALE GENOMIC DNA]</scope>
    <source>
        <strain>IFM 10152</strain>
    </source>
</reference>
<evidence type="ECO:0000255" key="1">
    <source>
        <dbReference type="HAMAP-Rule" id="MF_00033"/>
    </source>
</evidence>
<keyword id="KW-0131">Cell cycle</keyword>
<keyword id="KW-0132">Cell division</keyword>
<keyword id="KW-1003">Cell membrane</keyword>
<keyword id="KW-0133">Cell shape</keyword>
<keyword id="KW-0961">Cell wall biogenesis/degradation</keyword>
<keyword id="KW-0328">Glycosyltransferase</keyword>
<keyword id="KW-0472">Membrane</keyword>
<keyword id="KW-0573">Peptidoglycan synthesis</keyword>
<keyword id="KW-1185">Reference proteome</keyword>
<keyword id="KW-0808">Transferase</keyword>
<proteinExistence type="inferred from homology"/>
<organism>
    <name type="scientific">Nocardia farcinica (strain IFM 10152)</name>
    <dbReference type="NCBI Taxonomy" id="247156"/>
    <lineage>
        <taxon>Bacteria</taxon>
        <taxon>Bacillati</taxon>
        <taxon>Actinomycetota</taxon>
        <taxon>Actinomycetes</taxon>
        <taxon>Mycobacteriales</taxon>
        <taxon>Nocardiaceae</taxon>
        <taxon>Nocardia</taxon>
    </lineage>
</organism>
<comment type="function">
    <text evidence="1">Cell wall formation. Catalyzes the transfer of a GlcNAc subunit on undecaprenyl-pyrophosphoryl-MurNAc-pentapeptide (lipid intermediate I) to form undecaprenyl-pyrophosphoryl-MurNAc-(pentapeptide)GlcNAc (lipid intermediate II).</text>
</comment>
<comment type="catalytic activity">
    <reaction evidence="1">
        <text>di-trans,octa-cis-undecaprenyl diphospho-N-acetyl-alpha-D-muramoyl-L-alanyl-D-glutamyl-meso-2,6-diaminopimeloyl-D-alanyl-D-alanine + UDP-N-acetyl-alpha-D-glucosamine = di-trans,octa-cis-undecaprenyl diphospho-[N-acetyl-alpha-D-glucosaminyl-(1-&gt;4)]-N-acetyl-alpha-D-muramoyl-L-alanyl-D-glutamyl-meso-2,6-diaminopimeloyl-D-alanyl-D-alanine + UDP + H(+)</text>
        <dbReference type="Rhea" id="RHEA:31227"/>
        <dbReference type="ChEBI" id="CHEBI:15378"/>
        <dbReference type="ChEBI" id="CHEBI:57705"/>
        <dbReference type="ChEBI" id="CHEBI:58223"/>
        <dbReference type="ChEBI" id="CHEBI:61387"/>
        <dbReference type="ChEBI" id="CHEBI:61388"/>
        <dbReference type="EC" id="2.4.1.227"/>
    </reaction>
</comment>
<comment type="pathway">
    <text evidence="1">Cell wall biogenesis; peptidoglycan biosynthesis.</text>
</comment>
<comment type="subcellular location">
    <subcellularLocation>
        <location evidence="1">Cell membrane</location>
        <topology evidence="1">Peripheral membrane protein</topology>
        <orientation evidence="1">Cytoplasmic side</orientation>
    </subcellularLocation>
</comment>
<comment type="similarity">
    <text evidence="1">Belongs to the glycosyltransferase 28 family. MurG subfamily.</text>
</comment>
<accession>Q5YYX9</accession>
<name>MURG_NOCFA</name>